<protein>
    <recommendedName>
        <fullName>Probable cyclic nucleotide-gated ion channel 5</fullName>
        <shortName>AtCNGC5</shortName>
    </recommendedName>
    <alternativeName>
        <fullName>Cyclic nucleotide- and calmodulin-regulated ion channel 5</fullName>
    </alternativeName>
</protein>
<feature type="chain" id="PRO_0000219333" description="Probable cyclic nucleotide-gated ion channel 5">
    <location>
        <begin position="1"/>
        <end position="717"/>
    </location>
</feature>
<feature type="topological domain" description="Cytoplasmic" evidence="2">
    <location>
        <begin position="1"/>
        <end position="102"/>
    </location>
</feature>
<feature type="transmembrane region" description="Helical; Name=H1" evidence="2">
    <location>
        <begin position="103"/>
        <end position="123"/>
    </location>
</feature>
<feature type="topological domain" description="Extracellular" evidence="2">
    <location>
        <begin position="124"/>
        <end position="136"/>
    </location>
</feature>
<feature type="transmembrane region" description="Helical; Name=H2" evidence="2">
    <location>
        <begin position="137"/>
        <end position="157"/>
    </location>
</feature>
<feature type="topological domain" description="Cytoplasmic" evidence="2">
    <location>
        <begin position="158"/>
        <end position="190"/>
    </location>
</feature>
<feature type="transmembrane region" description="Helical; Name=H3" evidence="2">
    <location>
        <begin position="191"/>
        <end position="211"/>
    </location>
</feature>
<feature type="topological domain" description="Extracellular" evidence="2">
    <location>
        <begin position="212"/>
        <end position="224"/>
    </location>
</feature>
<feature type="transmembrane region" description="Helical; Name=H4" evidence="2">
    <location>
        <begin position="225"/>
        <end position="245"/>
    </location>
</feature>
<feature type="topological domain" description="Cytoplasmic" evidence="2">
    <location>
        <begin position="246"/>
        <end position="265"/>
    </location>
</feature>
<feature type="transmembrane region" description="Helical; Name=H5" evidence="2">
    <location>
        <begin position="266"/>
        <end position="286"/>
    </location>
</feature>
<feature type="topological domain" description="Extracellular" evidence="2">
    <location>
        <begin position="287"/>
        <end position="391"/>
    </location>
</feature>
<feature type="transmembrane region" description="Helical; Name=H6" evidence="2">
    <location>
        <begin position="392"/>
        <end position="412"/>
    </location>
</feature>
<feature type="topological domain" description="Cytoplasmic" evidence="2">
    <location>
        <begin position="413"/>
        <end position="717"/>
    </location>
</feature>
<feature type="domain" description="IQ" evidence="3">
    <location>
        <begin position="634"/>
        <end position="663"/>
    </location>
</feature>
<feature type="region of interest" description="Calmodulin-binding" evidence="1">
    <location>
        <begin position="614"/>
        <end position="629"/>
    </location>
</feature>
<feature type="binding site">
    <location>
        <begin position="498"/>
        <end position="628"/>
    </location>
    <ligand>
        <name>a nucleoside 3',5'-cyclic phosphate</name>
        <dbReference type="ChEBI" id="CHEBI:58464"/>
    </ligand>
</feature>
<feature type="binding site" evidence="1">
    <location>
        <position position="569"/>
    </location>
    <ligand>
        <name>a nucleoside 3',5'-cyclic phosphate</name>
        <dbReference type="ChEBI" id="CHEBI:58464"/>
    </ligand>
</feature>
<feature type="splice variant" id="VSP_008987" description="In isoform 2." evidence="4">
    <location>
        <begin position="10"/>
        <end position="16"/>
    </location>
</feature>
<reference key="1">
    <citation type="journal article" date="1999" name="Plant J.">
        <title>Characterisation of a novel gene family of putative cyclic nucleotide- and calmodulin-regulated ion channels in Arabidopsis thaliana.</title>
        <authorList>
            <person name="Koehler C."/>
            <person name="Merkle T."/>
            <person name="Neuhaus G."/>
        </authorList>
    </citation>
    <scope>NUCLEOTIDE SEQUENCE [MRNA] (ISOFORM 2)</scope>
    <source>
        <strain>cv. Columbia</strain>
    </source>
</reference>
<reference key="2">
    <citation type="journal article" date="1998" name="DNA Res.">
        <title>Structural analysis of Arabidopsis thaliana chromosome 5. VI. Sequence features of the regions of 1,367,185 bp covered by 19 physically assigned P1 and TAC clones.</title>
        <authorList>
            <person name="Kotani H."/>
            <person name="Nakamura Y."/>
            <person name="Sato S."/>
            <person name="Asamizu E."/>
            <person name="Kaneko T."/>
            <person name="Miyajima N."/>
            <person name="Tabata S."/>
        </authorList>
    </citation>
    <scope>NUCLEOTIDE SEQUENCE [LARGE SCALE GENOMIC DNA]</scope>
    <source>
        <strain>cv. Columbia</strain>
    </source>
</reference>
<reference key="3">
    <citation type="journal article" date="2017" name="Plant J.">
        <title>Araport11: a complete reannotation of the Arabidopsis thaliana reference genome.</title>
        <authorList>
            <person name="Cheng C.Y."/>
            <person name="Krishnakumar V."/>
            <person name="Chan A.P."/>
            <person name="Thibaud-Nissen F."/>
            <person name="Schobel S."/>
            <person name="Town C.D."/>
        </authorList>
    </citation>
    <scope>GENOME REANNOTATION</scope>
    <source>
        <strain>cv. Columbia</strain>
    </source>
</reference>
<reference key="4">
    <citation type="journal article" date="2003" name="Science">
        <title>Empirical analysis of transcriptional activity in the Arabidopsis genome.</title>
        <authorList>
            <person name="Yamada K."/>
            <person name="Lim J."/>
            <person name="Dale J.M."/>
            <person name="Chen H."/>
            <person name="Shinn P."/>
            <person name="Palm C.J."/>
            <person name="Southwick A.M."/>
            <person name="Wu H.C."/>
            <person name="Kim C.J."/>
            <person name="Nguyen M."/>
            <person name="Pham P.K."/>
            <person name="Cheuk R.F."/>
            <person name="Karlin-Newmann G."/>
            <person name="Liu S.X."/>
            <person name="Lam B."/>
            <person name="Sakano H."/>
            <person name="Wu T."/>
            <person name="Yu G."/>
            <person name="Miranda M."/>
            <person name="Quach H.L."/>
            <person name="Tripp M."/>
            <person name="Chang C.H."/>
            <person name="Lee J.M."/>
            <person name="Toriumi M.J."/>
            <person name="Chan M.M."/>
            <person name="Tang C.C."/>
            <person name="Onodera C.S."/>
            <person name="Deng J.M."/>
            <person name="Akiyama K."/>
            <person name="Ansari Y."/>
            <person name="Arakawa T."/>
            <person name="Banh J."/>
            <person name="Banno F."/>
            <person name="Bowser L."/>
            <person name="Brooks S.Y."/>
            <person name="Carninci P."/>
            <person name="Chao Q."/>
            <person name="Choy N."/>
            <person name="Enju A."/>
            <person name="Goldsmith A.D."/>
            <person name="Gurjal M."/>
            <person name="Hansen N.F."/>
            <person name="Hayashizaki Y."/>
            <person name="Johnson-Hopson C."/>
            <person name="Hsuan V.W."/>
            <person name="Iida K."/>
            <person name="Karnes M."/>
            <person name="Khan S."/>
            <person name="Koesema E."/>
            <person name="Ishida J."/>
            <person name="Jiang P.X."/>
            <person name="Jones T."/>
            <person name="Kawai J."/>
            <person name="Kamiya A."/>
            <person name="Meyers C."/>
            <person name="Nakajima M."/>
            <person name="Narusaka M."/>
            <person name="Seki M."/>
            <person name="Sakurai T."/>
            <person name="Satou M."/>
            <person name="Tamse R."/>
            <person name="Vaysberg M."/>
            <person name="Wallender E.K."/>
            <person name="Wong C."/>
            <person name="Yamamura Y."/>
            <person name="Yuan S."/>
            <person name="Shinozaki K."/>
            <person name="Davis R.W."/>
            <person name="Theologis A."/>
            <person name="Ecker J.R."/>
        </authorList>
    </citation>
    <scope>NUCLEOTIDE SEQUENCE [LARGE SCALE MRNA] (ISOFORM 1)</scope>
    <source>
        <strain>cv. Columbia</strain>
    </source>
</reference>
<reference key="5">
    <citation type="journal article" date="2001" name="Plant Physiol.">
        <title>Phylogenetic relationships within cation transporter families of Arabidopsis.</title>
        <authorList>
            <person name="Maeser P."/>
            <person name="Thomine S."/>
            <person name="Schroeder J.I."/>
            <person name="Ward J.M."/>
            <person name="Hirschi K."/>
            <person name="Sze H."/>
            <person name="Talke I.N."/>
            <person name="Amtmann A."/>
            <person name="Maathuis F.J.M."/>
            <person name="Sanders D."/>
            <person name="Harper J.F."/>
            <person name="Tchieu J."/>
            <person name="Gribskov M."/>
            <person name="Persans M.W."/>
            <person name="Salt D.E."/>
            <person name="Kim S.A."/>
            <person name="Guerinot M.L."/>
        </authorList>
    </citation>
    <scope>GENE FAMILY</scope>
    <scope>NOMENCLATURE</scope>
</reference>
<proteinExistence type="evidence at protein level"/>
<dbReference type="EMBL" id="Y17913">
    <property type="protein sequence ID" value="CAB40130.1"/>
    <property type="molecule type" value="mRNA"/>
</dbReference>
<dbReference type="EMBL" id="AB013396">
    <property type="protein sequence ID" value="BAB08864.1"/>
    <property type="molecule type" value="Genomic_DNA"/>
</dbReference>
<dbReference type="EMBL" id="CP002688">
    <property type="protein sequence ID" value="AED96974.1"/>
    <property type="molecule type" value="Genomic_DNA"/>
</dbReference>
<dbReference type="EMBL" id="CP002688">
    <property type="protein sequence ID" value="AED96975.1"/>
    <property type="molecule type" value="Genomic_DNA"/>
</dbReference>
<dbReference type="EMBL" id="CP002688">
    <property type="protein sequence ID" value="AED96976.1"/>
    <property type="molecule type" value="Genomic_DNA"/>
</dbReference>
<dbReference type="EMBL" id="AY091133">
    <property type="protein sequence ID" value="AAM14082.1"/>
    <property type="molecule type" value="mRNA"/>
</dbReference>
<dbReference type="EMBL" id="AY114053">
    <property type="protein sequence ID" value="AAM45101.1"/>
    <property type="molecule type" value="mRNA"/>
</dbReference>
<dbReference type="PIR" id="T52573">
    <property type="entry name" value="T52573"/>
</dbReference>
<dbReference type="RefSeq" id="NP_200602.2">
    <molecule id="Q8RWS9-1"/>
    <property type="nucleotide sequence ID" value="NM_125179.5"/>
</dbReference>
<dbReference type="RefSeq" id="NP_851209.1">
    <molecule id="Q8RWS9-1"/>
    <property type="nucleotide sequence ID" value="NM_180878.2"/>
</dbReference>
<dbReference type="RefSeq" id="NP_974953.1">
    <molecule id="Q8RWS9-2"/>
    <property type="nucleotide sequence ID" value="NM_203224.1"/>
</dbReference>
<dbReference type="PDB" id="9J35">
    <property type="method" value="EM"/>
    <property type="resolution" value="2.71 A"/>
    <property type="chains" value="A/B/C/D=1-717"/>
</dbReference>
<dbReference type="PDB" id="9J36">
    <property type="method" value="EM"/>
    <property type="resolution" value="2.50 A"/>
    <property type="chains" value="A/B/C/D=1-717"/>
</dbReference>
<dbReference type="PDBsum" id="9J35"/>
<dbReference type="PDBsum" id="9J36"/>
<dbReference type="EMDB" id="EMD-61106"/>
<dbReference type="EMDB" id="EMD-61107"/>
<dbReference type="BioGRID" id="21149">
    <property type="interactions" value="31"/>
</dbReference>
<dbReference type="FunCoup" id="Q8RWS9">
    <property type="interactions" value="522"/>
</dbReference>
<dbReference type="IntAct" id="Q8RWS9">
    <property type="interactions" value="28"/>
</dbReference>
<dbReference type="STRING" id="3702.Q8RWS9"/>
<dbReference type="PaxDb" id="3702-AT5G57940.1"/>
<dbReference type="ProteomicsDB" id="241242">
    <molecule id="Q8RWS9-1"/>
</dbReference>
<dbReference type="EnsemblPlants" id="AT5G57940.1">
    <molecule id="Q8RWS9-1"/>
    <property type="protein sequence ID" value="AT5G57940.1"/>
    <property type="gene ID" value="AT5G57940"/>
</dbReference>
<dbReference type="EnsemblPlants" id="AT5G57940.2">
    <molecule id="Q8RWS9-1"/>
    <property type="protein sequence ID" value="AT5G57940.2"/>
    <property type="gene ID" value="AT5G57940"/>
</dbReference>
<dbReference type="EnsemblPlants" id="AT5G57940.3">
    <molecule id="Q8RWS9-2"/>
    <property type="protein sequence ID" value="AT5G57940.3"/>
    <property type="gene ID" value="AT5G57940"/>
</dbReference>
<dbReference type="GeneID" id="835905"/>
<dbReference type="Gramene" id="AT5G57940.1">
    <molecule id="Q8RWS9-1"/>
    <property type="protein sequence ID" value="AT5G57940.1"/>
    <property type="gene ID" value="AT5G57940"/>
</dbReference>
<dbReference type="Gramene" id="AT5G57940.2">
    <molecule id="Q8RWS9-1"/>
    <property type="protein sequence ID" value="AT5G57940.2"/>
    <property type="gene ID" value="AT5G57940"/>
</dbReference>
<dbReference type="Gramene" id="AT5G57940.3">
    <molecule id="Q8RWS9-2"/>
    <property type="protein sequence ID" value="AT5G57940.3"/>
    <property type="gene ID" value="AT5G57940"/>
</dbReference>
<dbReference type="KEGG" id="ath:AT5G57940"/>
<dbReference type="Araport" id="AT5G57940"/>
<dbReference type="TAIR" id="AT5G57940">
    <property type="gene designation" value="CNGC5"/>
</dbReference>
<dbReference type="eggNOG" id="KOG0498">
    <property type="taxonomic scope" value="Eukaryota"/>
</dbReference>
<dbReference type="InParanoid" id="Q8RWS9"/>
<dbReference type="OMA" id="AWRRFTK"/>
<dbReference type="OrthoDB" id="421226at2759"/>
<dbReference type="PhylomeDB" id="Q8RWS9"/>
<dbReference type="PRO" id="PR:Q8RWS9"/>
<dbReference type="Proteomes" id="UP000006548">
    <property type="component" value="Chromosome 5"/>
</dbReference>
<dbReference type="ExpressionAtlas" id="Q8RWS9">
    <property type="expression patterns" value="baseline and differential"/>
</dbReference>
<dbReference type="GO" id="GO:0005886">
    <property type="term" value="C:plasma membrane"/>
    <property type="evidence" value="ECO:0000314"/>
    <property type="project" value="TAIR"/>
</dbReference>
<dbReference type="GO" id="GO:0035618">
    <property type="term" value="C:root hair"/>
    <property type="evidence" value="ECO:0000314"/>
    <property type="project" value="TAIR"/>
</dbReference>
<dbReference type="GO" id="GO:0005262">
    <property type="term" value="F:calcium channel activity"/>
    <property type="evidence" value="ECO:0000314"/>
    <property type="project" value="TAIR"/>
</dbReference>
<dbReference type="GO" id="GO:0005516">
    <property type="term" value="F:calmodulin binding"/>
    <property type="evidence" value="ECO:0007669"/>
    <property type="project" value="UniProtKB-KW"/>
</dbReference>
<dbReference type="GO" id="GO:0030552">
    <property type="term" value="F:cAMP binding"/>
    <property type="evidence" value="ECO:0007669"/>
    <property type="project" value="UniProtKB-KW"/>
</dbReference>
<dbReference type="GO" id="GO:0030553">
    <property type="term" value="F:cGMP binding"/>
    <property type="evidence" value="ECO:0007669"/>
    <property type="project" value="UniProtKB-KW"/>
</dbReference>
<dbReference type="GO" id="GO:0005223">
    <property type="term" value="F:intracellularly cGMP-activated cation channel activity"/>
    <property type="evidence" value="ECO:0000314"/>
    <property type="project" value="TAIR"/>
</dbReference>
<dbReference type="CDD" id="cd00038">
    <property type="entry name" value="CAP_ED"/>
    <property type="match status" value="1"/>
</dbReference>
<dbReference type="CDD" id="cd23767">
    <property type="entry name" value="IQCD"/>
    <property type="match status" value="1"/>
</dbReference>
<dbReference type="FunFam" id="1.10.287.630:FF:000003">
    <property type="entry name" value="Cyclic nucleotide-gated ion channel 1"/>
    <property type="match status" value="1"/>
</dbReference>
<dbReference type="FunFam" id="2.60.120.10:FF:000024">
    <property type="entry name" value="Cyclic nucleotide-gated ion channel 1"/>
    <property type="match status" value="1"/>
</dbReference>
<dbReference type="Gene3D" id="1.10.287.70">
    <property type="match status" value="1"/>
</dbReference>
<dbReference type="Gene3D" id="1.10.287.630">
    <property type="entry name" value="Helix hairpin bin"/>
    <property type="match status" value="1"/>
</dbReference>
<dbReference type="Gene3D" id="2.60.120.10">
    <property type="entry name" value="Jelly Rolls"/>
    <property type="match status" value="1"/>
</dbReference>
<dbReference type="InterPro" id="IPR000595">
    <property type="entry name" value="cNMP-bd_dom"/>
</dbReference>
<dbReference type="InterPro" id="IPR018490">
    <property type="entry name" value="cNMP-bd_dom_sf"/>
</dbReference>
<dbReference type="InterPro" id="IPR005821">
    <property type="entry name" value="Ion_trans_dom"/>
</dbReference>
<dbReference type="InterPro" id="IPR014710">
    <property type="entry name" value="RmlC-like_jellyroll"/>
</dbReference>
<dbReference type="PANTHER" id="PTHR45651">
    <property type="entry name" value="CYCLIC NUCLEOTIDE-GATED ION CHANNEL 15-RELATED-RELATED"/>
    <property type="match status" value="1"/>
</dbReference>
<dbReference type="PANTHER" id="PTHR45651:SF52">
    <property type="entry name" value="CYCLIC NUCLEOTIDE-GATED ION CHANNEL 5-RELATED"/>
    <property type="match status" value="1"/>
</dbReference>
<dbReference type="Pfam" id="PF00027">
    <property type="entry name" value="cNMP_binding"/>
    <property type="match status" value="1"/>
</dbReference>
<dbReference type="Pfam" id="PF00520">
    <property type="entry name" value="Ion_trans"/>
    <property type="match status" value="1"/>
</dbReference>
<dbReference type="SMART" id="SM00100">
    <property type="entry name" value="cNMP"/>
    <property type="match status" value="1"/>
</dbReference>
<dbReference type="SUPFAM" id="SSF51206">
    <property type="entry name" value="cAMP-binding domain-like"/>
    <property type="match status" value="1"/>
</dbReference>
<dbReference type="SUPFAM" id="SSF81324">
    <property type="entry name" value="Voltage-gated potassium channels"/>
    <property type="match status" value="1"/>
</dbReference>
<dbReference type="PROSITE" id="PS50042">
    <property type="entry name" value="CNMP_BINDING_3"/>
    <property type="match status" value="1"/>
</dbReference>
<dbReference type="PROSITE" id="PS50096">
    <property type="entry name" value="IQ"/>
    <property type="match status" value="1"/>
</dbReference>
<organism>
    <name type="scientific">Arabidopsis thaliana</name>
    <name type="common">Mouse-ear cress</name>
    <dbReference type="NCBI Taxonomy" id="3702"/>
    <lineage>
        <taxon>Eukaryota</taxon>
        <taxon>Viridiplantae</taxon>
        <taxon>Streptophyta</taxon>
        <taxon>Embryophyta</taxon>
        <taxon>Tracheophyta</taxon>
        <taxon>Spermatophyta</taxon>
        <taxon>Magnoliopsida</taxon>
        <taxon>eudicotyledons</taxon>
        <taxon>Gunneridae</taxon>
        <taxon>Pentapetalae</taxon>
        <taxon>rosids</taxon>
        <taxon>malvids</taxon>
        <taxon>Brassicales</taxon>
        <taxon>Brassicaceae</taxon>
        <taxon>Camelineae</taxon>
        <taxon>Arabidopsis</taxon>
    </lineage>
</organism>
<keyword id="KW-0002">3D-structure</keyword>
<keyword id="KW-0025">Alternative splicing</keyword>
<keyword id="KW-0112">Calmodulin-binding</keyword>
<keyword id="KW-0114">cAMP</keyword>
<keyword id="KW-0116">cAMP-binding</keyword>
<keyword id="KW-1003">Cell membrane</keyword>
<keyword id="KW-0140">cGMP</keyword>
<keyword id="KW-0142">cGMP-binding</keyword>
<keyword id="KW-0407">Ion channel</keyword>
<keyword id="KW-0406">Ion transport</keyword>
<keyword id="KW-1071">Ligand-gated ion channel</keyword>
<keyword id="KW-0472">Membrane</keyword>
<keyword id="KW-0547">Nucleotide-binding</keyword>
<keyword id="KW-1185">Reference proteome</keyword>
<keyword id="KW-0812">Transmembrane</keyword>
<keyword id="KW-1133">Transmembrane helix</keyword>
<keyword id="KW-0813">Transport</keyword>
<gene>
    <name type="primary">CNGC5</name>
    <name type="ordered locus">At5g57940</name>
    <name type="ORF">MTI20.20</name>
</gene>
<sequence>MAGKRENFVRVDDLDSRLPSSSVAFQQNYASNFSGQLHPIHASNETSRSFKKGIQKGSKGLKSIGRSLGFGVYRAVFPEDLKVSEKKIFDPQDKFLLYCNKLFVASCILSVFVDPFFFYLPVINAESKCLGIDRKLAITASTLRTFIDVFYLAHMALQLRTAYIAPSSRVFGRGELVIDPAQIAKRYLQRWFIIDFLSVLPLPQIVVWRFLQSSNGSDVLATKQALLFIVLVQYIPRFLRVLPLTSELKRTAGVFAETAWAGAAYYLLLYMLASHIVGAFWYLLALERNDACWQEACIDAGNCSTDFLYCGNQNMDGYAVWNRAKESVLKSKCRADLDDNNPPFDFGIYTQALSSGIVSSQNFIVKYCYCLWWGLQNLSTLGQGLETSTYPMEIIFSISLAISGLILFALLIGNMQTYLQSLTIRLEEMRVKRRDSEQWMHHRMLPQDLRERVRRYDQYKWLETRGVDEEYLVQNLPKDLRRDIKRHLCLALVRRVPLFKSMDDKLLDAICMRLKPCLFTESTYLVREGDPVDEMLFIIRGRLESVTTDGGRSGFFNRSLLKEGEFCGEELLTWALDPKSGVNLPSSTRTVKALTEVEAFALTSEELKFVASQFRRLHSRQVQHTFRFYSHQWRTWAACFIQAAWRRYCKRKKMEEAEAEAAAVSSSTAGPSYSIGAAFLATKFAANALRTIHRNRNTKIRDLVKLQKPPEPDFTAD</sequence>
<accession>Q8RWS9</accession>
<accession>Q9XFS3</accession>
<evidence type="ECO:0000250" key="1"/>
<evidence type="ECO:0000255" key="2"/>
<evidence type="ECO:0000255" key="3">
    <source>
        <dbReference type="PROSITE-ProRule" id="PRU00116"/>
    </source>
</evidence>
<evidence type="ECO:0000303" key="4">
    <source>
    </source>
</evidence>
<evidence type="ECO:0000305" key="5"/>
<comment type="function">
    <text>Probable cyclic nucleotide-gated ion channel.</text>
</comment>
<comment type="subunit">
    <text evidence="5">Homotetramer or heterotetramer.</text>
</comment>
<comment type="subcellular location">
    <subcellularLocation>
        <location evidence="5">Cell membrane</location>
        <topology evidence="5">Multi-pass membrane protein</topology>
    </subcellularLocation>
</comment>
<comment type="alternative products">
    <event type="alternative splicing"/>
    <isoform>
        <id>Q8RWS9-1</id>
        <name>1</name>
        <sequence type="displayed"/>
    </isoform>
    <isoform>
        <id>Q8RWS9-2</id>
        <name>2</name>
        <sequence type="described" ref="VSP_008987"/>
    </isoform>
</comment>
<comment type="domain">
    <text evidence="1">The binding of calmodulin to the C-terminus might interfere with cyclic nucleotide binding and thus channel activation.</text>
</comment>
<comment type="miscellaneous">
    <molecule>Isoform 2</molecule>
    <text evidence="5">May be due to a competing acceptor splice site.</text>
</comment>
<comment type="similarity">
    <text evidence="5">Belongs to the cyclic nucleotide-gated cation channel (TC 1.A.1.5) family.</text>
</comment>
<name>CNGC5_ARATH</name>